<dbReference type="EC" id="3.1.11.2"/>
<dbReference type="EMBL" id="AF151107">
    <property type="protein sequence ID" value="AAD48776.1"/>
    <property type="molecule type" value="mRNA"/>
</dbReference>
<dbReference type="EMBL" id="AF319570">
    <property type="protein sequence ID" value="AAK07617.1"/>
    <property type="molecule type" value="mRNA"/>
</dbReference>
<dbReference type="EMBL" id="AF319571">
    <property type="protein sequence ID" value="AAK07618.1"/>
    <property type="molecule type" value="mRNA"/>
</dbReference>
<dbReference type="EMBL" id="AF319572">
    <property type="protein sequence ID" value="AAK07619.1"/>
    <property type="molecule type" value="mRNA"/>
</dbReference>
<dbReference type="EMBL" id="AF319573">
    <property type="protein sequence ID" value="AAK07620.1"/>
    <property type="molecule type" value="mRNA"/>
</dbReference>
<dbReference type="EMBL" id="DQ145722">
    <property type="protein sequence ID" value="AAZ38719.1"/>
    <property type="molecule type" value="Genomic_DNA"/>
</dbReference>
<dbReference type="CCDS" id="CCDS35437.1">
    <molecule id="Q9BQ50-2"/>
</dbReference>
<dbReference type="RefSeq" id="NP_542432.2">
    <molecule id="Q9BQ50-2"/>
    <property type="nucleotide sequence ID" value="NM_080701.4"/>
</dbReference>
<dbReference type="PDB" id="1Y97">
    <property type="method" value="X-ray"/>
    <property type="resolution" value="2.50 A"/>
    <property type="chains" value="A/B=1-236"/>
</dbReference>
<dbReference type="PDBsum" id="1Y97"/>
<dbReference type="SMR" id="Q9BQ50"/>
<dbReference type="BioGRID" id="116388">
    <property type="interactions" value="76"/>
</dbReference>
<dbReference type="FunCoup" id="Q9BQ50">
    <property type="interactions" value="588"/>
</dbReference>
<dbReference type="IntAct" id="Q9BQ50">
    <property type="interactions" value="47"/>
</dbReference>
<dbReference type="STRING" id="9606.ENSP00000333441"/>
<dbReference type="PhosphoSitePlus" id="Q9BQ50"/>
<dbReference type="BioMuta" id="TREX2"/>
<dbReference type="DMDM" id="47606206"/>
<dbReference type="MassIVE" id="Q9BQ50"/>
<dbReference type="PaxDb" id="9606-ENSP00000333441"/>
<dbReference type="PeptideAtlas" id="Q9BQ50"/>
<dbReference type="ProteomicsDB" id="78622">
    <molecule id="Q9BQ50-1"/>
</dbReference>
<dbReference type="ProteomicsDB" id="78623">
    <molecule id="Q9BQ50-2"/>
</dbReference>
<dbReference type="Pumba" id="Q9BQ50"/>
<dbReference type="Antibodypedia" id="30811">
    <property type="antibodies" value="127 antibodies from 27 providers"/>
</dbReference>
<dbReference type="DNASU" id="11219"/>
<dbReference type="Ensembl" id="ENST00000330912.7">
    <molecule id="Q9BQ50-2"/>
    <property type="protein sequence ID" value="ENSP00000333441.2"/>
    <property type="gene ID" value="ENSG00000183479.13"/>
</dbReference>
<dbReference type="Ensembl" id="ENST00000334497.7">
    <molecule id="Q9BQ50-1"/>
    <property type="protein sequence ID" value="ENSP00000334993.2"/>
    <property type="gene ID" value="ENSG00000183479.13"/>
</dbReference>
<dbReference type="Ensembl" id="ENST00000338525.7">
    <molecule id="Q9BQ50-2"/>
    <property type="protein sequence ID" value="ENSP00000345218.2"/>
    <property type="gene ID" value="ENSG00000183479.13"/>
</dbReference>
<dbReference type="Ensembl" id="ENST00000370212.5">
    <molecule id="Q9BQ50-1"/>
    <property type="protein sequence ID" value="ENSP00000359231.5"/>
    <property type="gene ID" value="ENSG00000183479.13"/>
</dbReference>
<dbReference type="Ensembl" id="ENST00000370231.3">
    <molecule id="Q9BQ50-2"/>
    <property type="protein sequence ID" value="ENSP00000359251.2"/>
    <property type="gene ID" value="ENSG00000183479.13"/>
</dbReference>
<dbReference type="Ensembl" id="ENST00000370232.4">
    <molecule id="Q9BQ50-1"/>
    <property type="protein sequence ID" value="ENSP00000359252.1"/>
    <property type="gene ID" value="ENSG00000183479.13"/>
</dbReference>
<dbReference type="Ensembl" id="ENST00000393862.7">
    <molecule id="Q9BQ50-2"/>
    <property type="protein sequence ID" value="ENSP00000377442.2"/>
    <property type="gene ID" value="ENSG00000183479.13"/>
</dbReference>
<dbReference type="GeneID" id="11219"/>
<dbReference type="KEGG" id="hsa:11219"/>
<dbReference type="MANE-Select" id="ENST00000370231.3">
    <property type="protein sequence ID" value="ENSP00000359251.2"/>
    <property type="RefSeq nucleotide sequence ID" value="NM_080701.4"/>
    <property type="RefSeq protein sequence ID" value="NP_542432.2"/>
</dbReference>
<dbReference type="UCSC" id="uc011myp.2">
    <molecule id="Q9BQ50-2"/>
    <property type="organism name" value="human"/>
</dbReference>
<dbReference type="AGR" id="HGNC:12270"/>
<dbReference type="CTD" id="11219"/>
<dbReference type="DisGeNET" id="11219"/>
<dbReference type="GeneCards" id="TREX2"/>
<dbReference type="HGNC" id="HGNC:12270">
    <property type="gene designation" value="TREX2"/>
</dbReference>
<dbReference type="HPA" id="ENSG00000183479">
    <property type="expression patterns" value="Tissue enhanced (skin)"/>
</dbReference>
<dbReference type="MIM" id="300370">
    <property type="type" value="gene"/>
</dbReference>
<dbReference type="neXtProt" id="NX_Q9BQ50"/>
<dbReference type="OpenTargets" id="ENSG00000183479"/>
<dbReference type="PharmGKB" id="PA36950"/>
<dbReference type="VEuPathDB" id="HostDB:ENSG00000183479"/>
<dbReference type="eggNOG" id="KOG4793">
    <property type="taxonomic scope" value="Eukaryota"/>
</dbReference>
<dbReference type="GeneTree" id="ENSGT00390000012715"/>
<dbReference type="HOGENOM" id="CLU_067419_1_0_1"/>
<dbReference type="InParanoid" id="Q9BQ50"/>
<dbReference type="OrthoDB" id="10250935at2759"/>
<dbReference type="PAN-GO" id="Q9BQ50">
    <property type="GO annotations" value="3 GO annotations based on evolutionary models"/>
</dbReference>
<dbReference type="PhylomeDB" id="Q9BQ50"/>
<dbReference type="TreeFam" id="TF323333"/>
<dbReference type="PathwayCommons" id="Q9BQ50"/>
<dbReference type="SignaLink" id="Q9BQ50"/>
<dbReference type="BioGRID-ORCS" id="11219">
    <property type="hits" value="10 hits in 757 CRISPR screens"/>
</dbReference>
<dbReference type="EvolutionaryTrace" id="Q9BQ50"/>
<dbReference type="GeneWiki" id="TREX2"/>
<dbReference type="GenomeRNAi" id="11219"/>
<dbReference type="Pharos" id="Q9BQ50">
    <property type="development level" value="Tbio"/>
</dbReference>
<dbReference type="PRO" id="PR:Q9BQ50"/>
<dbReference type="Proteomes" id="UP000005640">
    <property type="component" value="Chromosome X"/>
</dbReference>
<dbReference type="RNAct" id="Q9BQ50">
    <property type="molecule type" value="protein"/>
</dbReference>
<dbReference type="Bgee" id="ENSG00000183479">
    <property type="expression patterns" value="Expressed in skin of abdomen and 83 other cell types or tissues"/>
</dbReference>
<dbReference type="GO" id="GO:0005737">
    <property type="term" value="C:cytoplasm"/>
    <property type="evidence" value="ECO:0000318"/>
    <property type="project" value="GO_Central"/>
</dbReference>
<dbReference type="GO" id="GO:0005634">
    <property type="term" value="C:nucleus"/>
    <property type="evidence" value="ECO:0007669"/>
    <property type="project" value="UniProtKB-SubCell"/>
</dbReference>
<dbReference type="GO" id="GO:0008296">
    <property type="term" value="F:3'-5'-DNA exonuclease activity"/>
    <property type="evidence" value="ECO:0000314"/>
    <property type="project" value="UniProtKB"/>
</dbReference>
<dbReference type="GO" id="GO:0003677">
    <property type="term" value="F:DNA binding"/>
    <property type="evidence" value="ECO:0000269"/>
    <property type="project" value="DisProt"/>
</dbReference>
<dbReference type="GO" id="GO:0008311">
    <property type="term" value="F:double-stranded DNA 3'-5' DNA exonuclease activity"/>
    <property type="evidence" value="ECO:0007669"/>
    <property type="project" value="UniProtKB-EC"/>
</dbReference>
<dbReference type="GO" id="GO:0000287">
    <property type="term" value="F:magnesium ion binding"/>
    <property type="evidence" value="ECO:0000314"/>
    <property type="project" value="UniProtKB"/>
</dbReference>
<dbReference type="GO" id="GO:0060090">
    <property type="term" value="F:molecular adaptor activity"/>
    <property type="evidence" value="ECO:0000269"/>
    <property type="project" value="DisProt"/>
</dbReference>
<dbReference type="GO" id="GO:0042803">
    <property type="term" value="F:protein homodimerization activity"/>
    <property type="evidence" value="ECO:0000353"/>
    <property type="project" value="UniProtKB"/>
</dbReference>
<dbReference type="GO" id="GO:0006308">
    <property type="term" value="P:DNA catabolic process"/>
    <property type="evidence" value="ECO:0000318"/>
    <property type="project" value="GO_Central"/>
</dbReference>
<dbReference type="GO" id="GO:0006259">
    <property type="term" value="P:DNA metabolic process"/>
    <property type="evidence" value="ECO:0000314"/>
    <property type="project" value="UniProtKB"/>
</dbReference>
<dbReference type="GO" id="GO:0006281">
    <property type="term" value="P:DNA repair"/>
    <property type="evidence" value="ECO:0000304"/>
    <property type="project" value="ProtInc"/>
</dbReference>
<dbReference type="CDD" id="cd06136">
    <property type="entry name" value="TREX1_2"/>
    <property type="match status" value="1"/>
</dbReference>
<dbReference type="DisProt" id="DP02710"/>
<dbReference type="FunFam" id="3.30.420.10:FF:000046">
    <property type="entry name" value="Three prime repair exonuclease 1"/>
    <property type="match status" value="1"/>
</dbReference>
<dbReference type="Gene3D" id="3.30.420.10">
    <property type="entry name" value="Ribonuclease H-like superfamily/Ribonuclease H"/>
    <property type="match status" value="1"/>
</dbReference>
<dbReference type="InterPro" id="IPR013520">
    <property type="entry name" value="Exonuclease_RNaseT/DNA_pol3"/>
</dbReference>
<dbReference type="InterPro" id="IPR012337">
    <property type="entry name" value="RNaseH-like_sf"/>
</dbReference>
<dbReference type="InterPro" id="IPR036397">
    <property type="entry name" value="RNaseH_sf"/>
</dbReference>
<dbReference type="InterPro" id="IPR040393">
    <property type="entry name" value="TREX1/2"/>
</dbReference>
<dbReference type="PANTHER" id="PTHR13058">
    <property type="entry name" value="THREE PRIME REPAIR EXONUCLEASE 1, 2"/>
    <property type="match status" value="1"/>
</dbReference>
<dbReference type="PANTHER" id="PTHR13058:SF24">
    <property type="entry name" value="THREE PRIME REPAIR EXONUCLEASE 2"/>
    <property type="match status" value="1"/>
</dbReference>
<dbReference type="SMART" id="SM00479">
    <property type="entry name" value="EXOIII"/>
    <property type="match status" value="1"/>
</dbReference>
<dbReference type="SUPFAM" id="SSF53098">
    <property type="entry name" value="Ribonuclease H-like"/>
    <property type="match status" value="1"/>
</dbReference>
<accession>Q9BQ50</accession>
<accession>Q45F08</accession>
<accession>Q9UN77</accession>
<feature type="chain" id="PRO_0000109870" description="Three prime repair exonuclease 2">
    <location>
        <begin position="1"/>
        <end position="236"/>
    </location>
</feature>
<feature type="active site" description="Proton donor/acceptor" evidence="1">
    <location>
        <position position="188"/>
    </location>
</feature>
<feature type="binding site" evidence="1">
    <location>
        <position position="14"/>
    </location>
    <ligand>
        <name>Mg(2+)</name>
        <dbReference type="ChEBI" id="CHEBI:18420"/>
        <label>1</label>
    </ligand>
</feature>
<feature type="binding site" evidence="1">
    <location>
        <position position="14"/>
    </location>
    <ligand>
        <name>Mg(2+)</name>
        <dbReference type="ChEBI" id="CHEBI:18420"/>
        <label>2</label>
    </ligand>
</feature>
<feature type="binding site" evidence="1">
    <location>
        <begin position="16"/>
        <end position="17"/>
    </location>
    <ligand>
        <name>substrate</name>
    </ligand>
</feature>
<feature type="binding site" evidence="1">
    <location>
        <position position="16"/>
    </location>
    <ligand>
        <name>Mg(2+)</name>
        <dbReference type="ChEBI" id="CHEBI:18420"/>
        <label>1</label>
    </ligand>
</feature>
<feature type="binding site" evidence="1">
    <location>
        <position position="122"/>
    </location>
    <ligand>
        <name>substrate</name>
    </ligand>
</feature>
<feature type="binding site" evidence="1">
    <location>
        <position position="193"/>
    </location>
    <ligand>
        <name>Mg(2+)</name>
        <dbReference type="ChEBI" id="CHEBI:18420"/>
        <label>1</label>
    </ligand>
</feature>
<feature type="binding site" evidence="1">
    <location>
        <position position="193"/>
    </location>
    <ligand>
        <name>substrate</name>
    </ligand>
</feature>
<feature type="splice variant" id="VSP_060357" description="In isoform 1.">
    <original>M</original>
    <variation>MGRAGSPLPRSSWPRMDDCGSRSRCSPTLCSSLRTCYPRGNITM</variation>
    <location>
        <position position="1"/>
    </location>
</feature>
<feature type="sequence variant" id="VAR_025211" description="In dbSNP:rs35132777." evidence="5">
    <original>R</original>
    <variation>C</variation>
    <location>
        <position position="137"/>
    </location>
</feature>
<feature type="mutagenesis site" description="Loss of enzyme activity; when associated with A-16. Almost abolishes enzyme activity." evidence="4">
    <original>D</original>
    <variation>A</variation>
    <location>
        <position position="14"/>
    </location>
</feature>
<feature type="mutagenesis site" description="Loss of enzyme activity; when associated with A-14. Almost abolishes enzyme activity." evidence="4">
    <original>E</original>
    <variation>A</variation>
    <location>
        <position position="16"/>
    </location>
</feature>
<feature type="mutagenesis site" description="Almost abolishes enzyme activity." evidence="4">
    <original>D</original>
    <variation>A</variation>
    <location>
        <position position="123"/>
    </location>
</feature>
<feature type="mutagenesis site" description="Strongly reduces DNA-binding; when associated with A-165 and A-167." evidence="4">
    <original>R</original>
    <variation>A</variation>
    <location>
        <position position="163"/>
    </location>
</feature>
<feature type="mutagenesis site" description="Strongly reduces DNA-binding; when associated with A-163 and A-167." evidence="4">
    <original>R</original>
    <variation>A</variation>
    <location>
        <position position="165"/>
    </location>
</feature>
<feature type="mutagenesis site" description="Strongly reduces DNA-binding; when associated with A-165 and A-165." evidence="4">
    <original>R</original>
    <variation>A</variation>
    <location>
        <position position="167"/>
    </location>
</feature>
<feature type="mutagenesis site" description="Loss of enzyme activity; when associated with A-193. Almost abolishes enzyme activity." evidence="4">
    <original>H</original>
    <variation>A</variation>
    <location>
        <position position="188"/>
    </location>
</feature>
<feature type="mutagenesis site" description="Loss of enzyme activity; when associated with A-188. Almost abolishes enzyme activity." evidence="4">
    <original>D</original>
    <variation>A</variation>
    <location>
        <position position="193"/>
    </location>
</feature>
<feature type="strand" evidence="7">
    <location>
        <begin position="8"/>
        <end position="19"/>
    </location>
</feature>
<feature type="helix" evidence="7">
    <location>
        <begin position="21"/>
        <end position="23"/>
    </location>
</feature>
<feature type="strand" evidence="7">
    <location>
        <begin position="27"/>
        <end position="36"/>
    </location>
</feature>
<feature type="helix" evidence="7">
    <location>
        <begin position="37"/>
        <end position="40"/>
    </location>
</feature>
<feature type="strand" evidence="7">
    <location>
        <begin position="58"/>
        <end position="63"/>
    </location>
</feature>
<feature type="helix" evidence="7">
    <location>
        <begin position="72"/>
        <end position="78"/>
    </location>
</feature>
<feature type="helix" evidence="7">
    <location>
        <begin position="82"/>
        <end position="87"/>
    </location>
</feature>
<feature type="helix" evidence="7">
    <location>
        <begin position="95"/>
        <end position="105"/>
    </location>
</feature>
<feature type="strand" evidence="7">
    <location>
        <begin position="110"/>
        <end position="116"/>
    </location>
</feature>
<feature type="turn" evidence="7">
    <location>
        <begin position="117"/>
        <end position="122"/>
    </location>
</feature>
<feature type="helix" evidence="7">
    <location>
        <begin position="123"/>
        <end position="133"/>
    </location>
</feature>
<feature type="strand" evidence="7">
    <location>
        <begin position="143"/>
        <end position="146"/>
    </location>
</feature>
<feature type="helix" evidence="7">
    <location>
        <begin position="147"/>
        <end position="157"/>
    </location>
</feature>
<feature type="helix" evidence="7">
    <location>
        <begin position="172"/>
        <end position="180"/>
    </location>
</feature>
<feature type="helix" evidence="7">
    <location>
        <begin position="190"/>
        <end position="203"/>
    </location>
</feature>
<feature type="helix" evidence="7">
    <location>
        <begin position="205"/>
        <end position="215"/>
    </location>
</feature>
<feature type="helix" evidence="7">
    <location>
        <begin position="219"/>
        <end position="221"/>
    </location>
</feature>
<organism>
    <name type="scientific">Homo sapiens</name>
    <name type="common">Human</name>
    <dbReference type="NCBI Taxonomy" id="9606"/>
    <lineage>
        <taxon>Eukaryota</taxon>
        <taxon>Metazoa</taxon>
        <taxon>Chordata</taxon>
        <taxon>Craniata</taxon>
        <taxon>Vertebrata</taxon>
        <taxon>Euteleostomi</taxon>
        <taxon>Mammalia</taxon>
        <taxon>Eutheria</taxon>
        <taxon>Euarchontoglires</taxon>
        <taxon>Primates</taxon>
        <taxon>Haplorrhini</taxon>
        <taxon>Catarrhini</taxon>
        <taxon>Hominidae</taxon>
        <taxon>Homo</taxon>
    </lineage>
</organism>
<protein>
    <recommendedName>
        <fullName>Three prime repair exonuclease 2</fullName>
        <ecNumber>3.1.11.2</ecNumber>
    </recommendedName>
    <alternativeName>
        <fullName>3'-5' exonuclease TREX2</fullName>
    </alternativeName>
</protein>
<gene>
    <name type="primary">TREX2</name>
</gene>
<evidence type="ECO:0000250" key="1"/>
<evidence type="ECO:0000269" key="2">
    <source>
    </source>
</evidence>
<evidence type="ECO:0000269" key="3">
    <source>
    </source>
</evidence>
<evidence type="ECO:0000269" key="4">
    <source>
    </source>
</evidence>
<evidence type="ECO:0000269" key="5">
    <source ref="2"/>
</evidence>
<evidence type="ECO:0000305" key="6"/>
<evidence type="ECO:0007829" key="7">
    <source>
        <dbReference type="PDB" id="1Y97"/>
    </source>
</evidence>
<keyword id="KW-0002">3D-structure</keyword>
<keyword id="KW-0025">Alternative splicing</keyword>
<keyword id="KW-0227">DNA damage</keyword>
<keyword id="KW-0234">DNA repair</keyword>
<keyword id="KW-0269">Exonuclease</keyword>
<keyword id="KW-0378">Hydrolase</keyword>
<keyword id="KW-0460">Magnesium</keyword>
<keyword id="KW-0479">Metal-binding</keyword>
<keyword id="KW-0540">Nuclease</keyword>
<keyword id="KW-0539">Nucleus</keyword>
<keyword id="KW-1267">Proteomics identification</keyword>
<keyword id="KW-1185">Reference proteome</keyword>
<reference key="1">
    <citation type="journal article" date="1999" name="J. Biol. Chem.">
        <title>Identification and expression of the TREX1 and TREX2 cDNA sequences encoding mammalian 3'--&gt;5' exonucleases.</title>
        <authorList>
            <person name="Mazur D.J."/>
            <person name="Perrino F.W."/>
        </authorList>
    </citation>
    <scope>NUCLEOTIDE SEQUENCE [MRNA] (ISOFORMS 1 AND 2)</scope>
</reference>
<reference key="2">
    <citation type="submission" date="2005-07" db="EMBL/GenBank/DDBJ databases">
        <authorList>
            <consortium name="NIEHS SNPs program"/>
        </authorList>
    </citation>
    <scope>NUCLEOTIDE SEQUENCE [GENOMIC DNA]</scope>
    <scope>VARIANT CYS-137</scope>
</reference>
<reference key="3">
    <citation type="journal article" date="2001" name="J. Biol. Chem.">
        <title>Structure and expression of the TREX1 and TREX2 3'--&gt;5' exonuclease genes.</title>
        <authorList>
            <person name="Mazur D.J."/>
            <person name="Perrino F.W."/>
        </authorList>
    </citation>
    <scope>ALTERNATIVE SPLICING</scope>
    <scope>TISSUE SPECIFICITY</scope>
</reference>
<reference key="4">
    <citation type="journal article" date="2001" name="J. Biol. Chem.">
        <title>Excision of 3' termini by the Trex1 and TREX2 3'--&gt;5' exonucleases. Characterization of the recombinant proteins.</title>
        <authorList>
            <person name="Mazur D.J."/>
            <person name="Perrino F.W."/>
        </authorList>
    </citation>
    <scope>FUNCTION</scope>
    <scope>CHARACTERIZATION</scope>
    <scope>HOMODIMERIZATION</scope>
</reference>
<reference key="5">
    <citation type="journal article" date="2005" name="J. Biol. Chem.">
        <title>The human TREX2 3' -&gt;5'-exonuclease structure suggests a mechanism for efficient nonprocessive DNA catalysis.</title>
        <authorList>
            <person name="Perrino F.W."/>
            <person name="Harvey S."/>
            <person name="McMillin S."/>
            <person name="Hollis T."/>
        </authorList>
    </citation>
    <scope>X-RAY CRYSTALLOGRAPHY (2.5 ANGSTROMS)</scope>
    <scope>SUBUNIT</scope>
    <scope>MUTAGENESIS OF ASP-14; GLU-16; ASP-123; ARG-163; ARG-165; ARG-167; HIS-188 AND ASP-193</scope>
</reference>
<name>TREX2_HUMAN</name>
<sequence>MSEAPRAETFVFLDLEATGLPSVEPEIAELSLFAVHRSSLENPEHDESGALVLPRVLDKLTLCMCPERPFTAKASEITGLSSEGLARCRKAGFDGAVVRTLQAFLSRQAGPICLVAHNGFDYDFPLLCAELRRLGARLPRDTVCLDTLPALRGLDRAHSHGTRARGRQGYSLGSLFHRYFRAEPSAAHSAEGDVHTLLLIFLHRAAELLAWADEQARGWAHIEPMYLPPDDPSLEA</sequence>
<comment type="function">
    <text evidence="3">Exonuclease with a preference for double-stranded DNA with mismatched 3' termini. May play a role in DNA repair.</text>
</comment>
<comment type="catalytic activity">
    <reaction>
        <text>Exonucleolytic cleavage in the 3'- to 5'-direction to yield nucleoside 5'-phosphates.</text>
        <dbReference type="EC" id="3.1.11.2"/>
    </reaction>
</comment>
<comment type="cofactor">
    <cofactor evidence="1">
        <name>Mg(2+)</name>
        <dbReference type="ChEBI" id="CHEBI:18420"/>
    </cofactor>
    <text evidence="1">Binds 2 Mg(2+) per subunit. The second magnesium ion interacts with only one residue. Substitution with Mn(2+) results in partial activity.</text>
</comment>
<comment type="biophysicochemical properties">
    <phDependence>
        <text>Optimum pH is 7.5-8.0.</text>
    </phDependence>
</comment>
<comment type="subunit">
    <text evidence="4">Homodimer.</text>
</comment>
<comment type="interaction">
    <interactant intactId="EBI-22217464">
        <id>Q9BQ50</id>
    </interactant>
    <interactant intactId="EBI-6165891">
        <id>Q14696</id>
        <label>MESD</label>
    </interactant>
    <organismsDiffer>false</organismsDiffer>
    <experiments>3</experiments>
</comment>
<comment type="subcellular location">
    <subcellularLocation>
        <location evidence="6">Nucleus</location>
    </subcellularLocation>
</comment>
<comment type="alternative products">
    <event type="alternative splicing"/>
    <isoform>
        <id>Q9BQ50-2</id>
        <name>2</name>
        <sequence type="displayed"/>
    </isoform>
    <isoform>
        <id>Q9BQ50-1</id>
        <name>1</name>
        <sequence type="described" ref="VSP_060357"/>
    </isoform>
</comment>
<comment type="tissue specificity">
    <text evidence="2">Detected in heart, breast, prostate, skeletal muscle, testis, uterus, bone marrow, colon, small intestine, stomach and thymus.</text>
</comment>
<comment type="miscellaneous">
    <molecule>Isoform 1</molecule>
    <text evidence="6">Only supported by readthrough transcripts formed via the splicing of exons from UCHL5IP and TREX2 genes.</text>
</comment>
<comment type="similarity">
    <text evidence="6">Belongs to the exonuclease superfamily. TREX family.</text>
</comment>
<proteinExistence type="evidence at protein level"/>